<gene>
    <name evidence="1" type="primary">rnc</name>
    <name type="ordered locus">ECP_2569</name>
</gene>
<comment type="function">
    <text evidence="1">Digests double-stranded RNA. Involved in the processing of primary rRNA transcript to yield the immediate precursors to the large and small rRNAs (23S and 16S). Processes some mRNAs, and tRNAs when they are encoded in the rRNA operon. Processes pre-crRNA and tracrRNA of type II CRISPR loci if present in the organism.</text>
</comment>
<comment type="catalytic activity">
    <reaction evidence="1">
        <text>Endonucleolytic cleavage to 5'-phosphomonoester.</text>
        <dbReference type="EC" id="3.1.26.3"/>
    </reaction>
</comment>
<comment type="cofactor">
    <cofactor evidence="1">
        <name>Mg(2+)</name>
        <dbReference type="ChEBI" id="CHEBI:18420"/>
    </cofactor>
</comment>
<comment type="subunit">
    <text evidence="1">Homodimer.</text>
</comment>
<comment type="subcellular location">
    <subcellularLocation>
        <location evidence="1">Cytoplasm</location>
    </subcellularLocation>
</comment>
<comment type="similarity">
    <text evidence="1">Belongs to the ribonuclease III family.</text>
</comment>
<dbReference type="EC" id="3.1.26.3" evidence="1"/>
<dbReference type="EMBL" id="CP000247">
    <property type="protein sequence ID" value="ABG70558.1"/>
    <property type="molecule type" value="Genomic_DNA"/>
</dbReference>
<dbReference type="RefSeq" id="WP_001068343.1">
    <property type="nucleotide sequence ID" value="NC_008253.1"/>
</dbReference>
<dbReference type="SMR" id="Q0TES1"/>
<dbReference type="GeneID" id="93774524"/>
<dbReference type="KEGG" id="ecp:ECP_2569"/>
<dbReference type="HOGENOM" id="CLU_000907_1_1_6"/>
<dbReference type="Proteomes" id="UP000009182">
    <property type="component" value="Chromosome"/>
</dbReference>
<dbReference type="GO" id="GO:0005737">
    <property type="term" value="C:cytoplasm"/>
    <property type="evidence" value="ECO:0007669"/>
    <property type="project" value="UniProtKB-SubCell"/>
</dbReference>
<dbReference type="GO" id="GO:0003725">
    <property type="term" value="F:double-stranded RNA binding"/>
    <property type="evidence" value="ECO:0007669"/>
    <property type="project" value="TreeGrafter"/>
</dbReference>
<dbReference type="GO" id="GO:0046872">
    <property type="term" value="F:metal ion binding"/>
    <property type="evidence" value="ECO:0007669"/>
    <property type="project" value="UniProtKB-KW"/>
</dbReference>
<dbReference type="GO" id="GO:0004525">
    <property type="term" value="F:ribonuclease III activity"/>
    <property type="evidence" value="ECO:0007669"/>
    <property type="project" value="UniProtKB-UniRule"/>
</dbReference>
<dbReference type="GO" id="GO:0019843">
    <property type="term" value="F:rRNA binding"/>
    <property type="evidence" value="ECO:0007669"/>
    <property type="project" value="UniProtKB-KW"/>
</dbReference>
<dbReference type="GO" id="GO:0006397">
    <property type="term" value="P:mRNA processing"/>
    <property type="evidence" value="ECO:0007669"/>
    <property type="project" value="UniProtKB-UniRule"/>
</dbReference>
<dbReference type="GO" id="GO:0010468">
    <property type="term" value="P:regulation of gene expression"/>
    <property type="evidence" value="ECO:0007669"/>
    <property type="project" value="TreeGrafter"/>
</dbReference>
<dbReference type="GO" id="GO:0006364">
    <property type="term" value="P:rRNA processing"/>
    <property type="evidence" value="ECO:0007669"/>
    <property type="project" value="UniProtKB-UniRule"/>
</dbReference>
<dbReference type="GO" id="GO:0008033">
    <property type="term" value="P:tRNA processing"/>
    <property type="evidence" value="ECO:0007669"/>
    <property type="project" value="UniProtKB-KW"/>
</dbReference>
<dbReference type="CDD" id="cd10845">
    <property type="entry name" value="DSRM_RNAse_III_family"/>
    <property type="match status" value="1"/>
</dbReference>
<dbReference type="CDD" id="cd00593">
    <property type="entry name" value="RIBOc"/>
    <property type="match status" value="1"/>
</dbReference>
<dbReference type="FunFam" id="1.10.1520.10:FF:000001">
    <property type="entry name" value="Ribonuclease 3"/>
    <property type="match status" value="1"/>
</dbReference>
<dbReference type="FunFam" id="3.30.160.20:FF:000003">
    <property type="entry name" value="Ribonuclease 3"/>
    <property type="match status" value="1"/>
</dbReference>
<dbReference type="Gene3D" id="3.30.160.20">
    <property type="match status" value="1"/>
</dbReference>
<dbReference type="Gene3D" id="1.10.1520.10">
    <property type="entry name" value="Ribonuclease III domain"/>
    <property type="match status" value="1"/>
</dbReference>
<dbReference type="HAMAP" id="MF_00104">
    <property type="entry name" value="RNase_III"/>
    <property type="match status" value="1"/>
</dbReference>
<dbReference type="InterPro" id="IPR014720">
    <property type="entry name" value="dsRBD_dom"/>
</dbReference>
<dbReference type="InterPro" id="IPR011907">
    <property type="entry name" value="RNase_III"/>
</dbReference>
<dbReference type="InterPro" id="IPR000999">
    <property type="entry name" value="RNase_III_dom"/>
</dbReference>
<dbReference type="InterPro" id="IPR036389">
    <property type="entry name" value="RNase_III_sf"/>
</dbReference>
<dbReference type="NCBIfam" id="TIGR02191">
    <property type="entry name" value="RNaseIII"/>
    <property type="match status" value="1"/>
</dbReference>
<dbReference type="PANTHER" id="PTHR11207:SF0">
    <property type="entry name" value="RIBONUCLEASE 3"/>
    <property type="match status" value="1"/>
</dbReference>
<dbReference type="PANTHER" id="PTHR11207">
    <property type="entry name" value="RIBONUCLEASE III"/>
    <property type="match status" value="1"/>
</dbReference>
<dbReference type="Pfam" id="PF00035">
    <property type="entry name" value="dsrm"/>
    <property type="match status" value="1"/>
</dbReference>
<dbReference type="Pfam" id="PF14622">
    <property type="entry name" value="Ribonucleas_3_3"/>
    <property type="match status" value="1"/>
</dbReference>
<dbReference type="SMART" id="SM00358">
    <property type="entry name" value="DSRM"/>
    <property type="match status" value="1"/>
</dbReference>
<dbReference type="SMART" id="SM00535">
    <property type="entry name" value="RIBOc"/>
    <property type="match status" value="1"/>
</dbReference>
<dbReference type="SUPFAM" id="SSF54768">
    <property type="entry name" value="dsRNA-binding domain-like"/>
    <property type="match status" value="1"/>
</dbReference>
<dbReference type="SUPFAM" id="SSF69065">
    <property type="entry name" value="RNase III domain-like"/>
    <property type="match status" value="1"/>
</dbReference>
<dbReference type="PROSITE" id="PS50137">
    <property type="entry name" value="DS_RBD"/>
    <property type="match status" value="1"/>
</dbReference>
<dbReference type="PROSITE" id="PS00517">
    <property type="entry name" value="RNASE_3_1"/>
    <property type="match status" value="1"/>
</dbReference>
<dbReference type="PROSITE" id="PS50142">
    <property type="entry name" value="RNASE_3_2"/>
    <property type="match status" value="1"/>
</dbReference>
<organism>
    <name type="scientific">Escherichia coli O6:K15:H31 (strain 536 / UPEC)</name>
    <dbReference type="NCBI Taxonomy" id="362663"/>
    <lineage>
        <taxon>Bacteria</taxon>
        <taxon>Pseudomonadati</taxon>
        <taxon>Pseudomonadota</taxon>
        <taxon>Gammaproteobacteria</taxon>
        <taxon>Enterobacterales</taxon>
        <taxon>Enterobacteriaceae</taxon>
        <taxon>Escherichia</taxon>
    </lineage>
</organism>
<reference key="1">
    <citation type="journal article" date="2006" name="Mol. Microbiol.">
        <title>Role of pathogenicity island-associated integrases in the genome plasticity of uropathogenic Escherichia coli strain 536.</title>
        <authorList>
            <person name="Hochhut B."/>
            <person name="Wilde C."/>
            <person name="Balling G."/>
            <person name="Middendorf B."/>
            <person name="Dobrindt U."/>
            <person name="Brzuszkiewicz E."/>
            <person name="Gottschalk G."/>
            <person name="Carniel E."/>
            <person name="Hacker J."/>
        </authorList>
    </citation>
    <scope>NUCLEOTIDE SEQUENCE [LARGE SCALE GENOMIC DNA]</scope>
    <source>
        <strain>536 / UPEC</strain>
    </source>
</reference>
<feature type="chain" id="PRO_1000075748" description="Ribonuclease 3">
    <location>
        <begin position="1"/>
        <end position="226"/>
    </location>
</feature>
<feature type="domain" description="RNase III" evidence="1">
    <location>
        <begin position="6"/>
        <end position="128"/>
    </location>
</feature>
<feature type="domain" description="DRBM" evidence="1">
    <location>
        <begin position="155"/>
        <end position="225"/>
    </location>
</feature>
<feature type="active site" evidence="1">
    <location>
        <position position="45"/>
    </location>
</feature>
<feature type="active site" evidence="1">
    <location>
        <position position="117"/>
    </location>
</feature>
<feature type="binding site" evidence="1">
    <location>
        <position position="41"/>
    </location>
    <ligand>
        <name>Mg(2+)</name>
        <dbReference type="ChEBI" id="CHEBI:18420"/>
    </ligand>
</feature>
<feature type="binding site" evidence="1">
    <location>
        <position position="114"/>
    </location>
    <ligand>
        <name>Mg(2+)</name>
        <dbReference type="ChEBI" id="CHEBI:18420"/>
    </ligand>
</feature>
<feature type="binding site" evidence="1">
    <location>
        <position position="117"/>
    </location>
    <ligand>
        <name>Mg(2+)</name>
        <dbReference type="ChEBI" id="CHEBI:18420"/>
    </ligand>
</feature>
<name>RNC_ECOL5</name>
<proteinExistence type="inferred from homology"/>
<accession>Q0TES1</accession>
<evidence type="ECO:0000255" key="1">
    <source>
        <dbReference type="HAMAP-Rule" id="MF_00104"/>
    </source>
</evidence>
<sequence length="226" mass="25550">MNPIVINRLQRKLGYTFNHQELLQQALTHRSASSKHNERLEFLGDSILSYVIANALYHRFPRVDEGDMSRMRATLVRGNTLAELAREFELGECLRLGPGELKSGGFRRESILADTVEALIGGVFLDSDIQTVEKLILNWYQTRLDEISPGDKQKDPKTRLQEYLQGRHLPLPTYLVVQVRGEAHDQEFTIHCQVSGLSEPVVGTGSSRRKAEQAAAEQALKKLELE</sequence>
<keyword id="KW-0963">Cytoplasm</keyword>
<keyword id="KW-0255">Endonuclease</keyword>
<keyword id="KW-0378">Hydrolase</keyword>
<keyword id="KW-0460">Magnesium</keyword>
<keyword id="KW-0479">Metal-binding</keyword>
<keyword id="KW-0507">mRNA processing</keyword>
<keyword id="KW-0540">Nuclease</keyword>
<keyword id="KW-0694">RNA-binding</keyword>
<keyword id="KW-0698">rRNA processing</keyword>
<keyword id="KW-0699">rRNA-binding</keyword>
<keyword id="KW-0819">tRNA processing</keyword>
<protein>
    <recommendedName>
        <fullName evidence="1">Ribonuclease 3</fullName>
        <ecNumber evidence="1">3.1.26.3</ecNumber>
    </recommendedName>
    <alternativeName>
        <fullName evidence="1">Ribonuclease III</fullName>
        <shortName evidence="1">RNase III</shortName>
    </alternativeName>
</protein>